<comment type="function">
    <text evidence="1">The glycine cleavage system catalyzes the degradation of glycine. The P protein binds the alpha-amino group of glycine through its pyridoxal phosphate cofactor; CO(2) is released and the remaining methylamine moiety is then transferred to the lipoamide cofactor of the H protein.</text>
</comment>
<comment type="catalytic activity">
    <reaction evidence="1">
        <text>N(6)-[(R)-lipoyl]-L-lysyl-[glycine-cleavage complex H protein] + glycine + H(+) = N(6)-[(R)-S(8)-aminomethyldihydrolipoyl]-L-lysyl-[glycine-cleavage complex H protein] + CO2</text>
        <dbReference type="Rhea" id="RHEA:24304"/>
        <dbReference type="Rhea" id="RHEA-COMP:10494"/>
        <dbReference type="Rhea" id="RHEA-COMP:10495"/>
        <dbReference type="ChEBI" id="CHEBI:15378"/>
        <dbReference type="ChEBI" id="CHEBI:16526"/>
        <dbReference type="ChEBI" id="CHEBI:57305"/>
        <dbReference type="ChEBI" id="CHEBI:83099"/>
        <dbReference type="ChEBI" id="CHEBI:83143"/>
        <dbReference type="EC" id="1.4.4.2"/>
    </reaction>
</comment>
<comment type="cofactor">
    <cofactor evidence="1">
        <name>pyridoxal 5'-phosphate</name>
        <dbReference type="ChEBI" id="CHEBI:597326"/>
    </cofactor>
</comment>
<comment type="subunit">
    <text evidence="1">The glycine cleavage system is composed of four proteins: P, T, L and H. In this organism, the P 'protein' is a heterodimer of two subunits.</text>
</comment>
<comment type="similarity">
    <text evidence="1">Belongs to the GcvP family. C-terminal subunit subfamily.</text>
</comment>
<feature type="chain" id="PRO_0000167000" description="Probable glycine dehydrogenase (decarboxylating) subunit 2">
    <location>
        <begin position="1"/>
        <end position="491"/>
    </location>
</feature>
<feature type="modified residue" description="N6-(pyridoxal phosphate)lysine" evidence="1">
    <location>
        <position position="274"/>
    </location>
</feature>
<keyword id="KW-0560">Oxidoreductase</keyword>
<keyword id="KW-0663">Pyridoxal phosphate</keyword>
<keyword id="KW-1185">Reference proteome</keyword>
<dbReference type="EC" id="1.4.4.2" evidence="1"/>
<dbReference type="EMBL" id="AP006627">
    <property type="protein sequence ID" value="BAD65028.1"/>
    <property type="molecule type" value="Genomic_DNA"/>
</dbReference>
<dbReference type="RefSeq" id="WP_011247336.1">
    <property type="nucleotide sequence ID" value="NC_006582.1"/>
</dbReference>
<dbReference type="SMR" id="Q5WF32"/>
<dbReference type="STRING" id="66692.ABC2493"/>
<dbReference type="KEGG" id="bcl:ABC2493"/>
<dbReference type="eggNOG" id="COG1003">
    <property type="taxonomic scope" value="Bacteria"/>
</dbReference>
<dbReference type="HOGENOM" id="CLU_004620_5_0_9"/>
<dbReference type="OrthoDB" id="9801272at2"/>
<dbReference type="Proteomes" id="UP000001168">
    <property type="component" value="Chromosome"/>
</dbReference>
<dbReference type="GO" id="GO:0005829">
    <property type="term" value="C:cytosol"/>
    <property type="evidence" value="ECO:0007669"/>
    <property type="project" value="TreeGrafter"/>
</dbReference>
<dbReference type="GO" id="GO:0005960">
    <property type="term" value="C:glycine cleavage complex"/>
    <property type="evidence" value="ECO:0007669"/>
    <property type="project" value="TreeGrafter"/>
</dbReference>
<dbReference type="GO" id="GO:0016594">
    <property type="term" value="F:glycine binding"/>
    <property type="evidence" value="ECO:0007669"/>
    <property type="project" value="TreeGrafter"/>
</dbReference>
<dbReference type="GO" id="GO:0004375">
    <property type="term" value="F:glycine dehydrogenase (decarboxylating) activity"/>
    <property type="evidence" value="ECO:0007669"/>
    <property type="project" value="UniProtKB-EC"/>
</dbReference>
<dbReference type="GO" id="GO:0030170">
    <property type="term" value="F:pyridoxal phosphate binding"/>
    <property type="evidence" value="ECO:0007669"/>
    <property type="project" value="TreeGrafter"/>
</dbReference>
<dbReference type="GO" id="GO:0019464">
    <property type="term" value="P:glycine decarboxylation via glycine cleavage system"/>
    <property type="evidence" value="ECO:0007669"/>
    <property type="project" value="UniProtKB-UniRule"/>
</dbReference>
<dbReference type="CDD" id="cd00613">
    <property type="entry name" value="GDC-P"/>
    <property type="match status" value="1"/>
</dbReference>
<dbReference type="FunFam" id="3.40.640.10:FF:000034">
    <property type="entry name" value="Probable glycine dehydrogenase (decarboxylating) subunit 2"/>
    <property type="match status" value="1"/>
</dbReference>
<dbReference type="FunFam" id="3.90.1150.10:FF:000014">
    <property type="entry name" value="Probable glycine dehydrogenase (decarboxylating) subunit 2"/>
    <property type="match status" value="1"/>
</dbReference>
<dbReference type="Gene3D" id="6.20.440.10">
    <property type="match status" value="1"/>
</dbReference>
<dbReference type="Gene3D" id="3.90.1150.10">
    <property type="entry name" value="Aspartate Aminotransferase, domain 1"/>
    <property type="match status" value="1"/>
</dbReference>
<dbReference type="Gene3D" id="3.40.640.10">
    <property type="entry name" value="Type I PLP-dependent aspartate aminotransferase-like (Major domain)"/>
    <property type="match status" value="1"/>
</dbReference>
<dbReference type="HAMAP" id="MF_00713">
    <property type="entry name" value="GcvPB"/>
    <property type="match status" value="1"/>
</dbReference>
<dbReference type="InterPro" id="IPR023012">
    <property type="entry name" value="GcvPB"/>
</dbReference>
<dbReference type="InterPro" id="IPR049316">
    <property type="entry name" value="GDC-P_C"/>
</dbReference>
<dbReference type="InterPro" id="IPR049315">
    <property type="entry name" value="GDC-P_N"/>
</dbReference>
<dbReference type="InterPro" id="IPR020581">
    <property type="entry name" value="GDC_P"/>
</dbReference>
<dbReference type="InterPro" id="IPR015424">
    <property type="entry name" value="PyrdxlP-dep_Trfase"/>
</dbReference>
<dbReference type="InterPro" id="IPR015421">
    <property type="entry name" value="PyrdxlP-dep_Trfase_major"/>
</dbReference>
<dbReference type="InterPro" id="IPR015422">
    <property type="entry name" value="PyrdxlP-dep_Trfase_small"/>
</dbReference>
<dbReference type="NCBIfam" id="NF003346">
    <property type="entry name" value="PRK04366.1"/>
    <property type="match status" value="1"/>
</dbReference>
<dbReference type="PANTHER" id="PTHR11773:SF1">
    <property type="entry name" value="GLYCINE DEHYDROGENASE (DECARBOXYLATING), MITOCHONDRIAL"/>
    <property type="match status" value="1"/>
</dbReference>
<dbReference type="PANTHER" id="PTHR11773">
    <property type="entry name" value="GLYCINE DEHYDROGENASE, DECARBOXYLATING"/>
    <property type="match status" value="1"/>
</dbReference>
<dbReference type="Pfam" id="PF21478">
    <property type="entry name" value="GcvP2_C"/>
    <property type="match status" value="1"/>
</dbReference>
<dbReference type="Pfam" id="PF02347">
    <property type="entry name" value="GDC-P"/>
    <property type="match status" value="1"/>
</dbReference>
<dbReference type="SUPFAM" id="SSF53383">
    <property type="entry name" value="PLP-dependent transferases"/>
    <property type="match status" value="1"/>
</dbReference>
<sequence length="491" mass="54809">MTQAKDVALIFELSKQGRVGHSLPNLDIEEQPLESLLPEAYVREEEPELPEVSELQIMRHYTALSKRNHGVDSGFYPLGSCTMKYNPKINEDIARLPGLVHVHPYQPEEQVQGSLKMLYSLQTALAEITGMDEVTLQPAAGAHGEWTGLMMIRAYHEANGDKKRTKVVVPDSAHGTNPASATVAGFESVTVRTNEAGLVDLDHLREVVNEETAALMLTNPNTLGLFEADIQEMADIIHRAGGKLYYDGANSNAILGIARPGDMGFDVVHLNLHKTFTGPHGGGGPGSGPVGVKKELVPFLPKPVLVNDDGFFRFDSDRPQSIGRVKPYYGNYGINLRAYTYIRTMGPDGLRQVSENAVLNANYMMRRLESYYDLPYAQHCKHEFVLSGKRQKKLGVRTLDIAKRLLDFGYHPPTIYFPLNVEECMMIEPTETESKETLDEFIEAMIQIAKEAEESPELVQEAPHHTVIKRLDETLAARKPILRYEMKKETV</sequence>
<reference key="1">
    <citation type="submission" date="2003-10" db="EMBL/GenBank/DDBJ databases">
        <title>The complete genome sequence of the alkaliphilic Bacillus clausii KSM-K16.</title>
        <authorList>
            <person name="Takaki Y."/>
            <person name="Kageyama Y."/>
            <person name="Shimamura S."/>
            <person name="Suzuki H."/>
            <person name="Nishi S."/>
            <person name="Hatada Y."/>
            <person name="Kawai S."/>
            <person name="Ito S."/>
            <person name="Horikoshi K."/>
        </authorList>
    </citation>
    <scope>NUCLEOTIDE SEQUENCE [LARGE SCALE GENOMIC DNA]</scope>
    <source>
        <strain>KSM-K16</strain>
    </source>
</reference>
<organism>
    <name type="scientific">Shouchella clausii (strain KSM-K16)</name>
    <name type="common">Alkalihalobacillus clausii</name>
    <dbReference type="NCBI Taxonomy" id="66692"/>
    <lineage>
        <taxon>Bacteria</taxon>
        <taxon>Bacillati</taxon>
        <taxon>Bacillota</taxon>
        <taxon>Bacilli</taxon>
        <taxon>Bacillales</taxon>
        <taxon>Bacillaceae</taxon>
        <taxon>Shouchella</taxon>
    </lineage>
</organism>
<proteinExistence type="inferred from homology"/>
<gene>
    <name evidence="1" type="primary">gcvPB</name>
    <name type="ordered locus">ABC2493</name>
</gene>
<name>GCSPB_SHOC1</name>
<evidence type="ECO:0000255" key="1">
    <source>
        <dbReference type="HAMAP-Rule" id="MF_00713"/>
    </source>
</evidence>
<accession>Q5WF32</accession>
<protein>
    <recommendedName>
        <fullName evidence="1">Probable glycine dehydrogenase (decarboxylating) subunit 2</fullName>
        <ecNumber evidence="1">1.4.4.2</ecNumber>
    </recommendedName>
    <alternativeName>
        <fullName evidence="1">Glycine cleavage system P-protein subunit 2</fullName>
    </alternativeName>
    <alternativeName>
        <fullName evidence="1">Glycine decarboxylase subunit 2</fullName>
    </alternativeName>
    <alternativeName>
        <fullName evidence="1">Glycine dehydrogenase (aminomethyl-transferring) subunit 2</fullName>
    </alternativeName>
</protein>